<dbReference type="EMBL" id="CU329671">
    <property type="protein sequence ID" value="CAC21416.1"/>
    <property type="molecule type" value="Genomic_DNA"/>
</dbReference>
<dbReference type="RefSeq" id="NP_596860.1">
    <property type="nucleotide sequence ID" value="NM_001023883.2"/>
</dbReference>
<dbReference type="SMR" id="Q9HDU1"/>
<dbReference type="BioGRID" id="277916">
    <property type="interactions" value="13"/>
</dbReference>
<dbReference type="STRING" id="284812.Q9HDU1"/>
<dbReference type="PaxDb" id="4896-SPBPB2B2.14c.1"/>
<dbReference type="EnsemblFungi" id="SPBPB2B2.14c.1">
    <property type="protein sequence ID" value="SPBPB2B2.14c.1:pep"/>
    <property type="gene ID" value="SPBPB2B2.14c"/>
</dbReference>
<dbReference type="KEGG" id="spo:2541408"/>
<dbReference type="PomBase" id="SPBPB2B2.14c"/>
<dbReference type="VEuPathDB" id="FungiDB:SPBPB2B2.14c"/>
<dbReference type="HOGENOM" id="CLU_097271_0_0_1"/>
<dbReference type="InParanoid" id="Q9HDU1"/>
<dbReference type="PhylomeDB" id="Q9HDU1"/>
<dbReference type="PRO" id="PR:Q9HDU1"/>
<dbReference type="Proteomes" id="UP000002485">
    <property type="component" value="Chromosome II"/>
</dbReference>
<dbReference type="GO" id="GO:0016020">
    <property type="term" value="C:membrane"/>
    <property type="evidence" value="ECO:0007669"/>
    <property type="project" value="UniProtKB-SubCell"/>
</dbReference>
<dbReference type="InterPro" id="IPR009340">
    <property type="entry name" value="DUF999"/>
</dbReference>
<dbReference type="Pfam" id="PF06198">
    <property type="entry name" value="DUF999"/>
    <property type="match status" value="1"/>
</dbReference>
<evidence type="ECO:0000255" key="1"/>
<evidence type="ECO:0000305" key="2"/>
<accession>Q9HDU1</accession>
<gene>
    <name type="ORF">SPBPB2B2.14c</name>
</gene>
<protein>
    <recommendedName>
        <fullName>UPF0494 membrane protein PB2B2.14c</fullName>
    </recommendedName>
</protein>
<proteinExistence type="inferred from homology"/>
<reference key="1">
    <citation type="journal article" date="2002" name="Nature">
        <title>The genome sequence of Schizosaccharomyces pombe.</title>
        <authorList>
            <person name="Wood V."/>
            <person name="Gwilliam R."/>
            <person name="Rajandream M.A."/>
            <person name="Lyne M.H."/>
            <person name="Lyne R."/>
            <person name="Stewart A."/>
            <person name="Sgouros J.G."/>
            <person name="Peat N."/>
            <person name="Hayles J."/>
            <person name="Baker S.G."/>
            <person name="Basham D."/>
            <person name="Bowman S."/>
            <person name="Brooks K."/>
            <person name="Brown D."/>
            <person name="Brown S."/>
            <person name="Chillingworth T."/>
            <person name="Churcher C.M."/>
            <person name="Collins M."/>
            <person name="Connor R."/>
            <person name="Cronin A."/>
            <person name="Davis P."/>
            <person name="Feltwell T."/>
            <person name="Fraser A."/>
            <person name="Gentles S."/>
            <person name="Goble A."/>
            <person name="Hamlin N."/>
            <person name="Harris D.E."/>
            <person name="Hidalgo J."/>
            <person name="Hodgson G."/>
            <person name="Holroyd S."/>
            <person name="Hornsby T."/>
            <person name="Howarth S."/>
            <person name="Huckle E.J."/>
            <person name="Hunt S."/>
            <person name="Jagels K."/>
            <person name="James K.D."/>
            <person name="Jones L."/>
            <person name="Jones M."/>
            <person name="Leather S."/>
            <person name="McDonald S."/>
            <person name="McLean J."/>
            <person name="Mooney P."/>
            <person name="Moule S."/>
            <person name="Mungall K.L."/>
            <person name="Murphy L.D."/>
            <person name="Niblett D."/>
            <person name="Odell C."/>
            <person name="Oliver K."/>
            <person name="O'Neil S."/>
            <person name="Pearson D."/>
            <person name="Quail M.A."/>
            <person name="Rabbinowitsch E."/>
            <person name="Rutherford K.M."/>
            <person name="Rutter S."/>
            <person name="Saunders D."/>
            <person name="Seeger K."/>
            <person name="Sharp S."/>
            <person name="Skelton J."/>
            <person name="Simmonds M.N."/>
            <person name="Squares R."/>
            <person name="Squares S."/>
            <person name="Stevens K."/>
            <person name="Taylor K."/>
            <person name="Taylor R.G."/>
            <person name="Tivey A."/>
            <person name="Walsh S.V."/>
            <person name="Warren T."/>
            <person name="Whitehead S."/>
            <person name="Woodward J.R."/>
            <person name="Volckaert G."/>
            <person name="Aert R."/>
            <person name="Robben J."/>
            <person name="Grymonprez B."/>
            <person name="Weltjens I."/>
            <person name="Vanstreels E."/>
            <person name="Rieger M."/>
            <person name="Schaefer M."/>
            <person name="Mueller-Auer S."/>
            <person name="Gabel C."/>
            <person name="Fuchs M."/>
            <person name="Duesterhoeft A."/>
            <person name="Fritzc C."/>
            <person name="Holzer E."/>
            <person name="Moestl D."/>
            <person name="Hilbert H."/>
            <person name="Borzym K."/>
            <person name="Langer I."/>
            <person name="Beck A."/>
            <person name="Lehrach H."/>
            <person name="Reinhardt R."/>
            <person name="Pohl T.M."/>
            <person name="Eger P."/>
            <person name="Zimmermann W."/>
            <person name="Wedler H."/>
            <person name="Wambutt R."/>
            <person name="Purnelle B."/>
            <person name="Goffeau A."/>
            <person name="Cadieu E."/>
            <person name="Dreano S."/>
            <person name="Gloux S."/>
            <person name="Lelaure V."/>
            <person name="Mottier S."/>
            <person name="Galibert F."/>
            <person name="Aves S.J."/>
            <person name="Xiang Z."/>
            <person name="Hunt C."/>
            <person name="Moore K."/>
            <person name="Hurst S.M."/>
            <person name="Lucas M."/>
            <person name="Rochet M."/>
            <person name="Gaillardin C."/>
            <person name="Tallada V.A."/>
            <person name="Garzon A."/>
            <person name="Thode G."/>
            <person name="Daga R.R."/>
            <person name="Cruzado L."/>
            <person name="Jimenez J."/>
            <person name="Sanchez M."/>
            <person name="del Rey F."/>
            <person name="Benito J."/>
            <person name="Dominguez A."/>
            <person name="Revuelta J.L."/>
            <person name="Moreno S."/>
            <person name="Armstrong J."/>
            <person name="Forsburg S.L."/>
            <person name="Cerutti L."/>
            <person name="Lowe T."/>
            <person name="McCombie W.R."/>
            <person name="Paulsen I."/>
            <person name="Potashkin J."/>
            <person name="Shpakovski G.V."/>
            <person name="Ussery D."/>
            <person name="Barrell B.G."/>
            <person name="Nurse P."/>
        </authorList>
    </citation>
    <scope>NUCLEOTIDE SEQUENCE [LARGE SCALE GENOMIC DNA]</scope>
    <source>
        <strain>972 / ATCC 24843</strain>
    </source>
</reference>
<comment type="subcellular location">
    <subcellularLocation>
        <location evidence="2">Membrane</location>
        <topology evidence="2">Multi-pass membrane protein</topology>
    </subcellularLocation>
</comment>
<comment type="similarity">
    <text evidence="2">Belongs to the UPF0494 family.</text>
</comment>
<organism>
    <name type="scientific">Schizosaccharomyces pombe (strain 972 / ATCC 24843)</name>
    <name type="common">Fission yeast</name>
    <dbReference type="NCBI Taxonomy" id="284812"/>
    <lineage>
        <taxon>Eukaryota</taxon>
        <taxon>Fungi</taxon>
        <taxon>Dikarya</taxon>
        <taxon>Ascomycota</taxon>
        <taxon>Taphrinomycotina</taxon>
        <taxon>Schizosaccharomycetes</taxon>
        <taxon>Schizosaccharomycetales</taxon>
        <taxon>Schizosaccharomycetaceae</taxon>
        <taxon>Schizosaccharomyces</taxon>
    </lineage>
</organism>
<sequence>MVRDTRNVDLEWGLELCKPEKVNKQNLFTNIIKPQKDKINIKTDKIKFFLDNLFTEFSKFHDSCYPDGRISTRSKLRWPLLIIWCILIVFAIDKNFEVKDFLSIWINESFINENRFYSEIWGPIAIYICLFVLLLLGLIYCSKIVVKAIPLISIVIAAVVVIIAVAMVKILYICHWLIYKILILAFGIKVKPLGDTLPTHNGETGSHSKATVGSDIEQIEFQNMPTPVKK</sequence>
<keyword id="KW-0472">Membrane</keyword>
<keyword id="KW-1185">Reference proteome</keyword>
<keyword id="KW-0812">Transmembrane</keyword>
<keyword id="KW-1133">Transmembrane helix</keyword>
<name>YHEE_SCHPO</name>
<feature type="chain" id="PRO_0000306278" description="UPF0494 membrane protein PB2B2.14c">
    <location>
        <begin position="1"/>
        <end position="230"/>
    </location>
</feature>
<feature type="transmembrane region" description="Helical" evidence="1">
    <location>
        <begin position="78"/>
        <end position="98"/>
    </location>
</feature>
<feature type="transmembrane region" description="Helical" evidence="1">
    <location>
        <begin position="120"/>
        <end position="140"/>
    </location>
</feature>
<feature type="transmembrane region" description="Helical" evidence="1">
    <location>
        <begin position="148"/>
        <end position="168"/>
    </location>
</feature>